<proteinExistence type="inferred from homology"/>
<feature type="chain" id="PRO_0000139927" description="Ribonuclease PH">
    <location>
        <begin position="1"/>
        <end position="238"/>
    </location>
</feature>
<feature type="region of interest" description="Disordered" evidence="2">
    <location>
        <begin position="67"/>
        <end position="87"/>
    </location>
</feature>
<feature type="binding site" evidence="1">
    <location>
        <position position="86"/>
    </location>
    <ligand>
        <name>phosphate</name>
        <dbReference type="ChEBI" id="CHEBI:43474"/>
        <note>substrate</note>
    </ligand>
</feature>
<feature type="binding site" evidence="1">
    <location>
        <begin position="124"/>
        <end position="126"/>
    </location>
    <ligand>
        <name>phosphate</name>
        <dbReference type="ChEBI" id="CHEBI:43474"/>
        <note>substrate</note>
    </ligand>
</feature>
<accession>Q8XXF5</accession>
<organism>
    <name type="scientific">Ralstonia nicotianae (strain ATCC BAA-1114 / GMI1000)</name>
    <name type="common">Ralstonia solanacearum</name>
    <dbReference type="NCBI Taxonomy" id="267608"/>
    <lineage>
        <taxon>Bacteria</taxon>
        <taxon>Pseudomonadati</taxon>
        <taxon>Pseudomonadota</taxon>
        <taxon>Betaproteobacteria</taxon>
        <taxon>Burkholderiales</taxon>
        <taxon>Burkholderiaceae</taxon>
        <taxon>Ralstonia</taxon>
        <taxon>Ralstonia solanacearum species complex</taxon>
    </lineage>
</organism>
<sequence length="238" mass="25456">MRPSGRQPDQLRPVTLTRHYTRHAEGSVLVCFGDTHVLCTASVLPKVPPHKKGSGEGWVTAEYGMLPRSTHTRSDREAARGKQSGRTQEIQRLIGRAMRSVFDLSALGEHTIHLDCDVLQADGGTRTASITGAFVAAHDAISVMRKKGQLTGEPIRDFVAAVSVGVVDGVPVLDLDYPEDASCDTDMNIVMTGAGGFVEVQGTAEGTPFTRTEMDALLGLADHGIRTLIGLQKQALGL</sequence>
<comment type="function">
    <text evidence="1">Phosphorolytic 3'-5' exoribonuclease that plays an important role in tRNA 3'-end maturation. Removes nucleotide residues following the 3'-CCA terminus of tRNAs; can also add nucleotides to the ends of RNA molecules by using nucleoside diphosphates as substrates, but this may not be physiologically important. Probably plays a role in initiation of 16S rRNA degradation (leading to ribosome degradation) during starvation.</text>
</comment>
<comment type="catalytic activity">
    <reaction evidence="1">
        <text>tRNA(n+1) + phosphate = tRNA(n) + a ribonucleoside 5'-diphosphate</text>
        <dbReference type="Rhea" id="RHEA:10628"/>
        <dbReference type="Rhea" id="RHEA-COMP:17343"/>
        <dbReference type="Rhea" id="RHEA-COMP:17344"/>
        <dbReference type="ChEBI" id="CHEBI:43474"/>
        <dbReference type="ChEBI" id="CHEBI:57930"/>
        <dbReference type="ChEBI" id="CHEBI:173114"/>
        <dbReference type="EC" id="2.7.7.56"/>
    </reaction>
</comment>
<comment type="subunit">
    <text evidence="1">Homohexameric ring arranged as a trimer of dimers.</text>
</comment>
<comment type="similarity">
    <text evidence="1">Belongs to the RNase PH family.</text>
</comment>
<reference key="1">
    <citation type="journal article" date="2002" name="Nature">
        <title>Genome sequence of the plant pathogen Ralstonia solanacearum.</title>
        <authorList>
            <person name="Salanoubat M."/>
            <person name="Genin S."/>
            <person name="Artiguenave F."/>
            <person name="Gouzy J."/>
            <person name="Mangenot S."/>
            <person name="Arlat M."/>
            <person name="Billault A."/>
            <person name="Brottier P."/>
            <person name="Camus J.-C."/>
            <person name="Cattolico L."/>
            <person name="Chandler M."/>
            <person name="Choisne N."/>
            <person name="Claudel-Renard C."/>
            <person name="Cunnac S."/>
            <person name="Demange N."/>
            <person name="Gaspin C."/>
            <person name="Lavie M."/>
            <person name="Moisan A."/>
            <person name="Robert C."/>
            <person name="Saurin W."/>
            <person name="Schiex T."/>
            <person name="Siguier P."/>
            <person name="Thebault P."/>
            <person name="Whalen M."/>
            <person name="Wincker P."/>
            <person name="Levy M."/>
            <person name="Weissenbach J."/>
            <person name="Boucher C.A."/>
        </authorList>
    </citation>
    <scope>NUCLEOTIDE SEQUENCE [LARGE SCALE GENOMIC DNA]</scope>
    <source>
        <strain>ATCC BAA-1114 / GMI1000</strain>
    </source>
</reference>
<evidence type="ECO:0000255" key="1">
    <source>
        <dbReference type="HAMAP-Rule" id="MF_00564"/>
    </source>
</evidence>
<evidence type="ECO:0000256" key="2">
    <source>
        <dbReference type="SAM" id="MobiDB-lite"/>
    </source>
</evidence>
<gene>
    <name evidence="1" type="primary">rph</name>
    <name type="ordered locus">RSc2159</name>
    <name type="ORF">RS01443</name>
</gene>
<name>RNPH_RALN1</name>
<dbReference type="EC" id="2.7.7.56" evidence="1"/>
<dbReference type="EMBL" id="AL646052">
    <property type="protein sequence ID" value="CAD15866.1"/>
    <property type="molecule type" value="Genomic_DNA"/>
</dbReference>
<dbReference type="RefSeq" id="WP_011002088.1">
    <property type="nucleotide sequence ID" value="NC_003295.1"/>
</dbReference>
<dbReference type="SMR" id="Q8XXF5"/>
<dbReference type="STRING" id="267608.RSc2159"/>
<dbReference type="EnsemblBacteria" id="CAD15866">
    <property type="protein sequence ID" value="CAD15866"/>
    <property type="gene ID" value="RSc2159"/>
</dbReference>
<dbReference type="KEGG" id="rso:RSc2159"/>
<dbReference type="PATRIC" id="fig|267608.8.peg.2194"/>
<dbReference type="eggNOG" id="COG0689">
    <property type="taxonomic scope" value="Bacteria"/>
</dbReference>
<dbReference type="HOGENOM" id="CLU_050858_0_0_4"/>
<dbReference type="Proteomes" id="UP000001436">
    <property type="component" value="Chromosome"/>
</dbReference>
<dbReference type="GO" id="GO:0000175">
    <property type="term" value="F:3'-5'-RNA exonuclease activity"/>
    <property type="evidence" value="ECO:0007669"/>
    <property type="project" value="UniProtKB-UniRule"/>
</dbReference>
<dbReference type="GO" id="GO:0000049">
    <property type="term" value="F:tRNA binding"/>
    <property type="evidence" value="ECO:0007669"/>
    <property type="project" value="UniProtKB-UniRule"/>
</dbReference>
<dbReference type="GO" id="GO:0009022">
    <property type="term" value="F:tRNA nucleotidyltransferase activity"/>
    <property type="evidence" value="ECO:0007669"/>
    <property type="project" value="UniProtKB-UniRule"/>
</dbReference>
<dbReference type="GO" id="GO:0016075">
    <property type="term" value="P:rRNA catabolic process"/>
    <property type="evidence" value="ECO:0007669"/>
    <property type="project" value="UniProtKB-UniRule"/>
</dbReference>
<dbReference type="GO" id="GO:0006364">
    <property type="term" value="P:rRNA processing"/>
    <property type="evidence" value="ECO:0007669"/>
    <property type="project" value="UniProtKB-KW"/>
</dbReference>
<dbReference type="GO" id="GO:0008033">
    <property type="term" value="P:tRNA processing"/>
    <property type="evidence" value="ECO:0007669"/>
    <property type="project" value="UniProtKB-UniRule"/>
</dbReference>
<dbReference type="CDD" id="cd11362">
    <property type="entry name" value="RNase_PH_bact"/>
    <property type="match status" value="1"/>
</dbReference>
<dbReference type="FunFam" id="3.30.230.70:FF:000003">
    <property type="entry name" value="Ribonuclease PH"/>
    <property type="match status" value="1"/>
</dbReference>
<dbReference type="Gene3D" id="3.30.230.70">
    <property type="entry name" value="GHMP Kinase, N-terminal domain"/>
    <property type="match status" value="1"/>
</dbReference>
<dbReference type="HAMAP" id="MF_00564">
    <property type="entry name" value="RNase_PH"/>
    <property type="match status" value="1"/>
</dbReference>
<dbReference type="InterPro" id="IPR001247">
    <property type="entry name" value="ExoRNase_PH_dom1"/>
</dbReference>
<dbReference type="InterPro" id="IPR015847">
    <property type="entry name" value="ExoRNase_PH_dom2"/>
</dbReference>
<dbReference type="InterPro" id="IPR036345">
    <property type="entry name" value="ExoRNase_PH_dom2_sf"/>
</dbReference>
<dbReference type="InterPro" id="IPR027408">
    <property type="entry name" value="PNPase/RNase_PH_dom_sf"/>
</dbReference>
<dbReference type="InterPro" id="IPR020568">
    <property type="entry name" value="Ribosomal_Su5_D2-typ_SF"/>
</dbReference>
<dbReference type="InterPro" id="IPR050080">
    <property type="entry name" value="RNase_PH"/>
</dbReference>
<dbReference type="InterPro" id="IPR002381">
    <property type="entry name" value="RNase_PH_bac-type"/>
</dbReference>
<dbReference type="InterPro" id="IPR018336">
    <property type="entry name" value="RNase_PH_CS"/>
</dbReference>
<dbReference type="NCBIfam" id="TIGR01966">
    <property type="entry name" value="RNasePH"/>
    <property type="match status" value="1"/>
</dbReference>
<dbReference type="PANTHER" id="PTHR11953">
    <property type="entry name" value="EXOSOME COMPLEX COMPONENT"/>
    <property type="match status" value="1"/>
</dbReference>
<dbReference type="PANTHER" id="PTHR11953:SF0">
    <property type="entry name" value="EXOSOME COMPLEX COMPONENT RRP41"/>
    <property type="match status" value="1"/>
</dbReference>
<dbReference type="Pfam" id="PF01138">
    <property type="entry name" value="RNase_PH"/>
    <property type="match status" value="1"/>
</dbReference>
<dbReference type="Pfam" id="PF03725">
    <property type="entry name" value="RNase_PH_C"/>
    <property type="match status" value="1"/>
</dbReference>
<dbReference type="SUPFAM" id="SSF55666">
    <property type="entry name" value="Ribonuclease PH domain 2-like"/>
    <property type="match status" value="1"/>
</dbReference>
<dbReference type="SUPFAM" id="SSF54211">
    <property type="entry name" value="Ribosomal protein S5 domain 2-like"/>
    <property type="match status" value="1"/>
</dbReference>
<dbReference type="PROSITE" id="PS01277">
    <property type="entry name" value="RIBONUCLEASE_PH"/>
    <property type="match status" value="1"/>
</dbReference>
<protein>
    <recommendedName>
        <fullName evidence="1">Ribonuclease PH</fullName>
        <shortName evidence="1">RNase PH</shortName>
        <ecNumber evidence="1">2.7.7.56</ecNumber>
    </recommendedName>
    <alternativeName>
        <fullName evidence="1">tRNA nucleotidyltransferase</fullName>
    </alternativeName>
</protein>
<keyword id="KW-0548">Nucleotidyltransferase</keyword>
<keyword id="KW-1185">Reference proteome</keyword>
<keyword id="KW-0694">RNA-binding</keyword>
<keyword id="KW-0698">rRNA processing</keyword>
<keyword id="KW-0808">Transferase</keyword>
<keyword id="KW-0819">tRNA processing</keyword>
<keyword id="KW-0820">tRNA-binding</keyword>